<keyword id="KW-1015">Disulfide bond</keyword>
<keyword id="KW-0960">Knottin</keyword>
<keyword id="KW-0964">Secreted</keyword>
<keyword id="KW-0732">Signal</keyword>
<keyword id="KW-0800">Toxin</keyword>
<dbReference type="EMBL" id="EU925948">
    <property type="protein sequence ID" value="ACI41280.1"/>
    <property type="molecule type" value="mRNA"/>
</dbReference>
<dbReference type="EMBL" id="FM863952">
    <property type="protein sequence ID" value="CAS03550.1"/>
    <property type="molecule type" value="mRNA"/>
</dbReference>
<dbReference type="SMR" id="B6DCL4"/>
<dbReference type="ArachnoServer" id="AS000897">
    <property type="toxin name" value="U1-lycotoxin-Ls1c"/>
</dbReference>
<dbReference type="GO" id="GO:0005576">
    <property type="term" value="C:extracellular region"/>
    <property type="evidence" value="ECO:0007669"/>
    <property type="project" value="UniProtKB-SubCell"/>
</dbReference>
<dbReference type="GO" id="GO:0090729">
    <property type="term" value="F:toxin activity"/>
    <property type="evidence" value="ECO:0007669"/>
    <property type="project" value="UniProtKB-KW"/>
</dbReference>
<dbReference type="InterPro" id="IPR019553">
    <property type="entry name" value="Spider_toxin_CSTX_knottin"/>
</dbReference>
<dbReference type="InterPro" id="IPR011142">
    <property type="entry name" value="Spider_toxin_CSTX_Knottin_CS"/>
</dbReference>
<dbReference type="Pfam" id="PF10530">
    <property type="entry name" value="Toxin_35"/>
    <property type="match status" value="1"/>
</dbReference>
<dbReference type="PROSITE" id="PS60029">
    <property type="entry name" value="SPIDER_CSTX"/>
    <property type="match status" value="1"/>
</dbReference>
<organism>
    <name type="scientific">Lycosa singoriensis</name>
    <name type="common">Wolf spider</name>
    <name type="synonym">Aranea singoriensis</name>
    <dbReference type="NCBI Taxonomy" id="434756"/>
    <lineage>
        <taxon>Eukaryota</taxon>
        <taxon>Metazoa</taxon>
        <taxon>Ecdysozoa</taxon>
        <taxon>Arthropoda</taxon>
        <taxon>Chelicerata</taxon>
        <taxon>Arachnida</taxon>
        <taxon>Araneae</taxon>
        <taxon>Araneomorphae</taxon>
        <taxon>Entelegynae</taxon>
        <taxon>Lycosoidea</taxon>
        <taxon>Lycosidae</taxon>
        <taxon>Lycosa</taxon>
    </lineage>
</organism>
<sequence>MMKVLVVVALLVTLISYSSSEGIDDLEADELLSLMANEQTRKECVPKHHECTSNKHGCCRGNFFKYKCQCTTVVTQDGEQTERCFCGTPPHHKAAELVVGFGKKIFG</sequence>
<comment type="subcellular location">
    <subcellularLocation>
        <location evidence="1">Secreted</location>
    </subcellularLocation>
</comment>
<comment type="tissue specificity">
    <text>Expressed by the venom gland.</text>
</comment>
<comment type="domain">
    <text evidence="1">The presence of a 'disulfide through disulfide knot' structurally defines this protein as a knottin.</text>
</comment>
<comment type="similarity">
    <text evidence="3">Belongs to the neurotoxin 19 (CSTX) family. 04 (U1-Lctx) subfamily.</text>
</comment>
<protein>
    <recommendedName>
        <fullName>U1-lycotoxin-Ls1c</fullName>
    </recommendedName>
    <alternativeName>
        <fullName>Toxin-like structure LSTX-A25</fullName>
    </alternativeName>
</protein>
<evidence type="ECO:0000250" key="1"/>
<evidence type="ECO:0000255" key="2"/>
<evidence type="ECO:0000305" key="3"/>
<proteinExistence type="evidence at transcript level"/>
<name>TX125_LYCSI</name>
<accession>B6DCL4</accession>
<reference key="1">
    <citation type="journal article" date="2010" name="Zoology">
        <title>Transcriptome analysis of the venom glands of the Chinese wolf spider Lycosa singoriensis.</title>
        <authorList>
            <person name="Zhang Y."/>
            <person name="Chen J."/>
            <person name="Tang X."/>
            <person name="Wang F."/>
            <person name="Jiang L."/>
            <person name="Xiong X."/>
            <person name="Wang M."/>
            <person name="Rong M."/>
            <person name="Liu Z."/>
            <person name="Liang S."/>
        </authorList>
    </citation>
    <scope>NUCLEOTIDE SEQUENCE [LARGE SCALE MRNA]</scope>
    <source>
        <tissue>Venom gland</tissue>
    </source>
</reference>
<feature type="signal peptide" evidence="2">
    <location>
        <begin position="1"/>
        <end position="20"/>
    </location>
</feature>
<feature type="propeptide" id="PRO_0000401545" evidence="1">
    <location>
        <begin position="21"/>
        <end position="41"/>
    </location>
</feature>
<feature type="chain" id="PRO_0000401546" description="U1-lycotoxin-Ls1c">
    <location>
        <begin position="42"/>
        <end position="107"/>
    </location>
</feature>
<feature type="disulfide bond" evidence="1">
    <location>
        <begin position="44"/>
        <end position="59"/>
    </location>
</feature>
<feature type="disulfide bond" evidence="1">
    <location>
        <begin position="51"/>
        <end position="68"/>
    </location>
</feature>
<feature type="disulfide bond" evidence="1">
    <location>
        <begin position="58"/>
        <end position="86"/>
    </location>
</feature>
<feature type="disulfide bond" evidence="1">
    <location>
        <begin position="70"/>
        <end position="84"/>
    </location>
</feature>